<comment type="function">
    <text evidence="1">Cotranslationally removes the N-terminal methionine from nascent proteins. The N-terminal methionine is often cleaved when the second residue in the primary sequence is small and uncharged (Met-Ala-, Cys, Gly, Pro, Ser, Thr, or Val).</text>
</comment>
<comment type="catalytic activity">
    <reaction evidence="1">
        <text>Release of N-terminal amino acids, preferentially methionine, from peptides and arylamides.</text>
        <dbReference type="EC" id="3.4.11.18"/>
    </reaction>
</comment>
<comment type="cofactor">
    <cofactor evidence="1">
        <name>Co(2+)</name>
        <dbReference type="ChEBI" id="CHEBI:48828"/>
    </cofactor>
    <cofactor evidence="1">
        <name>Zn(2+)</name>
        <dbReference type="ChEBI" id="CHEBI:29105"/>
    </cofactor>
    <cofactor evidence="1">
        <name>Mn(2+)</name>
        <dbReference type="ChEBI" id="CHEBI:29035"/>
    </cofactor>
    <cofactor evidence="1">
        <name>Fe(2+)</name>
        <dbReference type="ChEBI" id="CHEBI:29033"/>
    </cofactor>
    <text evidence="1">Binds 2 divalent metal cations per subunit. Has a high-affinity and a low affinity metal-binding site. The true nature of the physiological cofactor is under debate. The enzyme is active with cobalt, zinc, manganese or divalent iron ions. Most likely, methionine aminopeptidases function as mononuclear Fe(2+)-metalloproteases under physiological conditions, and the catalytically relevant metal-binding site has been assigned to the histidine-containing high-affinity site.</text>
</comment>
<comment type="subcellular location">
    <subcellularLocation>
        <location evidence="1">Cytoplasm</location>
    </subcellularLocation>
</comment>
<comment type="similarity">
    <text evidence="1">Belongs to the peptidase M24A family. Methionine aminopeptidase eukaryotic type 2 subfamily.</text>
</comment>
<proteinExistence type="inferred from homology"/>
<organism>
    <name type="scientific">Leptosphaeria maculans (strain JN3 / isolate v23.1.3 / race Av1-4-5-6-7-8)</name>
    <name type="common">Blackleg fungus</name>
    <name type="synonym">Phoma lingam</name>
    <dbReference type="NCBI Taxonomy" id="985895"/>
    <lineage>
        <taxon>Eukaryota</taxon>
        <taxon>Fungi</taxon>
        <taxon>Dikarya</taxon>
        <taxon>Ascomycota</taxon>
        <taxon>Pezizomycotina</taxon>
        <taxon>Dothideomycetes</taxon>
        <taxon>Pleosporomycetidae</taxon>
        <taxon>Pleosporales</taxon>
        <taxon>Pleosporineae</taxon>
        <taxon>Leptosphaeriaceae</taxon>
        <taxon>Plenodomus</taxon>
        <taxon>Plenodomus lingam/Leptosphaeria maculans species complex</taxon>
    </lineage>
</organism>
<keyword id="KW-0031">Aminopeptidase</keyword>
<keyword id="KW-0963">Cytoplasm</keyword>
<keyword id="KW-0378">Hydrolase</keyword>
<keyword id="KW-0479">Metal-binding</keyword>
<keyword id="KW-0645">Protease</keyword>
<keyword id="KW-1185">Reference proteome</keyword>
<sequence>MAAQVEDDVANLKLDDSTTKPTNGTSQPDSKLSAEAEDSDDDAEGDGNGTGEAGADGAAKKKKKRKPRKKKKAGTSATAGAKSQTSPPRVLISDLFPNDSYPEGEICEYRDENSYRTTNEEKRHLDRMNNDFLTDYRKGAEIHRQVRQWAANWIKPGMTLTEIAEGIEDSVRALTGHQGLEEGDAQKAGMGFPTGLSINHCAAHYTPNAGNKVVVNYEDVMKVDFGVHINGRIVDSAFTKTFDPVYDPLVEACKAATNAGIKEAGIDVRMSDIGAAIQEVMESYEVEIGGKMLPVKCIRNLNGHSIGHYTIHGGKTVPIVKGSDQTKMEEGETFAIETFGSTGKGYVRDDMETSHYALRPDAPKVALRISSAKSLLASITKNFGTLPFCRRYLDRLGHDKYLLGLNNLVSSGIVEAYPPLCDIKGSWTAQSEHTFVLRPTCKEVLSRGDDY</sequence>
<name>MAP22_LEPMJ</name>
<reference key="1">
    <citation type="journal article" date="2011" name="Nat. Commun.">
        <title>Effector diversification within compartments of the Leptosphaeria maculans genome affected by Repeat-Induced Point mutations.</title>
        <authorList>
            <person name="Rouxel T."/>
            <person name="Grandaubert J."/>
            <person name="Hane J.K."/>
            <person name="Hoede C."/>
            <person name="van de Wouw A.P."/>
            <person name="Couloux A."/>
            <person name="Dominguez V."/>
            <person name="Anthouard V."/>
            <person name="Bally P."/>
            <person name="Bourras S."/>
            <person name="Cozijnsen A.J."/>
            <person name="Ciuffetti L.M."/>
            <person name="Degrave A."/>
            <person name="Dilmaghani A."/>
            <person name="Duret L."/>
            <person name="Fudal I."/>
            <person name="Goodwin S.B."/>
            <person name="Gout L."/>
            <person name="Glaser N."/>
            <person name="Linglin J."/>
            <person name="Kema G.H.J."/>
            <person name="Lapalu N."/>
            <person name="Lawrence C.B."/>
            <person name="May K."/>
            <person name="Meyer M."/>
            <person name="Ollivier B."/>
            <person name="Poulain J."/>
            <person name="Schoch C.L."/>
            <person name="Simon A."/>
            <person name="Spatafora J.W."/>
            <person name="Stachowiak A."/>
            <person name="Turgeon B.G."/>
            <person name="Tyler B.M."/>
            <person name="Vincent D."/>
            <person name="Weissenbach J."/>
            <person name="Amselem J."/>
            <person name="Quesneville H."/>
            <person name="Oliver R.P."/>
            <person name="Wincker P."/>
            <person name="Balesdent M.-H."/>
            <person name="Howlett B.J."/>
        </authorList>
    </citation>
    <scope>NUCLEOTIDE SEQUENCE [LARGE SCALE GENOMIC DNA]</scope>
    <source>
        <strain>JN3 / isolate v23.1.3 / race Av1-4-5-6-7-8</strain>
    </source>
</reference>
<protein>
    <recommendedName>
        <fullName evidence="1">Methionine aminopeptidase 2-2</fullName>
        <shortName evidence="1">MAP 2-2</shortName>
        <shortName evidence="1">MetAP 2-2</shortName>
        <ecNumber evidence="1">3.4.11.18</ecNumber>
    </recommendedName>
    <alternativeName>
        <fullName evidence="1">Peptidase M</fullName>
    </alternativeName>
</protein>
<accession>E5R4J3</accession>
<gene>
    <name type="ORF">Lema_P046670</name>
</gene>
<dbReference type="EC" id="3.4.11.18" evidence="1"/>
<dbReference type="EMBL" id="FP929083">
    <property type="protein sequence ID" value="CBX91961.1"/>
    <property type="molecule type" value="Genomic_DNA"/>
</dbReference>
<dbReference type="RefSeq" id="XP_003835326.1">
    <property type="nucleotide sequence ID" value="XM_003835278.1"/>
</dbReference>
<dbReference type="SMR" id="E5R4J3"/>
<dbReference type="FunCoup" id="E5R4J3">
    <property type="interactions" value="1103"/>
</dbReference>
<dbReference type="STRING" id="985895.E5R4J3"/>
<dbReference type="EnsemblFungi" id="CBX91961">
    <property type="protein sequence ID" value="CBX91961"/>
    <property type="gene ID" value="LEMA_P046670.1"/>
</dbReference>
<dbReference type="VEuPathDB" id="FungiDB:LEMA_P046670.1"/>
<dbReference type="eggNOG" id="KOG2775">
    <property type="taxonomic scope" value="Eukaryota"/>
</dbReference>
<dbReference type="HOGENOM" id="CLU_015857_7_1_1"/>
<dbReference type="InParanoid" id="E5R4J3"/>
<dbReference type="OMA" id="PFAKRWL"/>
<dbReference type="OrthoDB" id="7848262at2759"/>
<dbReference type="Proteomes" id="UP000002668">
    <property type="component" value="Genome"/>
</dbReference>
<dbReference type="GO" id="GO:0005737">
    <property type="term" value="C:cytoplasm"/>
    <property type="evidence" value="ECO:0007669"/>
    <property type="project" value="UniProtKB-SubCell"/>
</dbReference>
<dbReference type="GO" id="GO:0004239">
    <property type="term" value="F:initiator methionyl aminopeptidase activity"/>
    <property type="evidence" value="ECO:0007669"/>
    <property type="project" value="UniProtKB-UniRule"/>
</dbReference>
<dbReference type="GO" id="GO:0046872">
    <property type="term" value="F:metal ion binding"/>
    <property type="evidence" value="ECO:0007669"/>
    <property type="project" value="UniProtKB-UniRule"/>
</dbReference>
<dbReference type="GO" id="GO:0070006">
    <property type="term" value="F:metalloaminopeptidase activity"/>
    <property type="evidence" value="ECO:0007669"/>
    <property type="project" value="UniProtKB-UniRule"/>
</dbReference>
<dbReference type="GO" id="GO:0006508">
    <property type="term" value="P:proteolysis"/>
    <property type="evidence" value="ECO:0007669"/>
    <property type="project" value="UniProtKB-KW"/>
</dbReference>
<dbReference type="CDD" id="cd01088">
    <property type="entry name" value="MetAP2"/>
    <property type="match status" value="1"/>
</dbReference>
<dbReference type="Gene3D" id="3.90.230.10">
    <property type="entry name" value="Creatinase/methionine aminopeptidase superfamily"/>
    <property type="match status" value="1"/>
</dbReference>
<dbReference type="Gene3D" id="1.10.10.10">
    <property type="entry name" value="Winged helix-like DNA-binding domain superfamily/Winged helix DNA-binding domain"/>
    <property type="match status" value="1"/>
</dbReference>
<dbReference type="HAMAP" id="MF_03175">
    <property type="entry name" value="MetAP_2_euk"/>
    <property type="match status" value="1"/>
</dbReference>
<dbReference type="InterPro" id="IPR036005">
    <property type="entry name" value="Creatinase/aminopeptidase-like"/>
</dbReference>
<dbReference type="InterPro" id="IPR050247">
    <property type="entry name" value="Met_Aminopeptidase_Type2"/>
</dbReference>
<dbReference type="InterPro" id="IPR000994">
    <property type="entry name" value="Pept_M24"/>
</dbReference>
<dbReference type="InterPro" id="IPR001714">
    <property type="entry name" value="Pept_M24_MAP"/>
</dbReference>
<dbReference type="InterPro" id="IPR002468">
    <property type="entry name" value="Pept_M24A_MAP2"/>
</dbReference>
<dbReference type="InterPro" id="IPR018349">
    <property type="entry name" value="Pept_M24A_MAP2_BS"/>
</dbReference>
<dbReference type="InterPro" id="IPR036388">
    <property type="entry name" value="WH-like_DNA-bd_sf"/>
</dbReference>
<dbReference type="InterPro" id="IPR036390">
    <property type="entry name" value="WH_DNA-bd_sf"/>
</dbReference>
<dbReference type="NCBIfam" id="TIGR00501">
    <property type="entry name" value="met_pdase_II"/>
    <property type="match status" value="1"/>
</dbReference>
<dbReference type="PANTHER" id="PTHR45777">
    <property type="entry name" value="METHIONINE AMINOPEPTIDASE 2"/>
    <property type="match status" value="1"/>
</dbReference>
<dbReference type="PANTHER" id="PTHR45777:SF2">
    <property type="entry name" value="METHIONINE AMINOPEPTIDASE 2"/>
    <property type="match status" value="1"/>
</dbReference>
<dbReference type="Pfam" id="PF00557">
    <property type="entry name" value="Peptidase_M24"/>
    <property type="match status" value="1"/>
</dbReference>
<dbReference type="PRINTS" id="PR00599">
    <property type="entry name" value="MAPEPTIDASE"/>
</dbReference>
<dbReference type="SUPFAM" id="SSF55920">
    <property type="entry name" value="Creatinase/aminopeptidase"/>
    <property type="match status" value="1"/>
</dbReference>
<dbReference type="SUPFAM" id="SSF46785">
    <property type="entry name" value="Winged helix' DNA-binding domain"/>
    <property type="match status" value="1"/>
</dbReference>
<dbReference type="PROSITE" id="PS01202">
    <property type="entry name" value="MAP_2"/>
    <property type="match status" value="1"/>
</dbReference>
<feature type="chain" id="PRO_0000407607" description="Methionine aminopeptidase 2-2">
    <location>
        <begin position="1"/>
        <end position="451"/>
    </location>
</feature>
<feature type="region of interest" description="Disordered" evidence="2">
    <location>
        <begin position="1"/>
        <end position="97"/>
    </location>
</feature>
<feature type="compositionally biased region" description="Polar residues" evidence="2">
    <location>
        <begin position="19"/>
        <end position="28"/>
    </location>
</feature>
<feature type="compositionally biased region" description="Acidic residues" evidence="2">
    <location>
        <begin position="35"/>
        <end position="45"/>
    </location>
</feature>
<feature type="compositionally biased region" description="Basic residues" evidence="2">
    <location>
        <begin position="60"/>
        <end position="73"/>
    </location>
</feature>
<feature type="compositionally biased region" description="Low complexity" evidence="2">
    <location>
        <begin position="74"/>
        <end position="83"/>
    </location>
</feature>
<feature type="binding site" evidence="1">
    <location>
        <position position="204"/>
    </location>
    <ligand>
        <name>substrate</name>
    </ligand>
</feature>
<feature type="binding site" evidence="1">
    <location>
        <position position="224"/>
    </location>
    <ligand>
        <name>a divalent metal cation</name>
        <dbReference type="ChEBI" id="CHEBI:60240"/>
        <label>1</label>
    </ligand>
</feature>
<feature type="binding site" evidence="1">
    <location>
        <position position="235"/>
    </location>
    <ligand>
        <name>a divalent metal cation</name>
        <dbReference type="ChEBI" id="CHEBI:60240"/>
        <label>1</label>
    </ligand>
</feature>
<feature type="binding site" evidence="1">
    <location>
        <position position="235"/>
    </location>
    <ligand>
        <name>a divalent metal cation</name>
        <dbReference type="ChEBI" id="CHEBI:60240"/>
        <label>2</label>
        <note>catalytic</note>
    </ligand>
</feature>
<feature type="binding site" evidence="1">
    <location>
        <position position="304"/>
    </location>
    <ligand>
        <name>a divalent metal cation</name>
        <dbReference type="ChEBI" id="CHEBI:60240"/>
        <label>2</label>
        <note>catalytic</note>
    </ligand>
</feature>
<feature type="binding site" evidence="1">
    <location>
        <position position="312"/>
    </location>
    <ligand>
        <name>substrate</name>
    </ligand>
</feature>
<feature type="binding site" evidence="1">
    <location>
        <position position="337"/>
    </location>
    <ligand>
        <name>a divalent metal cation</name>
        <dbReference type="ChEBI" id="CHEBI:60240"/>
        <label>2</label>
        <note>catalytic</note>
    </ligand>
</feature>
<feature type="binding site" evidence="1">
    <location>
        <position position="432"/>
    </location>
    <ligand>
        <name>a divalent metal cation</name>
        <dbReference type="ChEBI" id="CHEBI:60240"/>
        <label>1</label>
    </ligand>
</feature>
<feature type="binding site" evidence="1">
    <location>
        <position position="432"/>
    </location>
    <ligand>
        <name>a divalent metal cation</name>
        <dbReference type="ChEBI" id="CHEBI:60240"/>
        <label>2</label>
        <note>catalytic</note>
    </ligand>
</feature>
<evidence type="ECO:0000255" key="1">
    <source>
        <dbReference type="HAMAP-Rule" id="MF_03175"/>
    </source>
</evidence>
<evidence type="ECO:0000256" key="2">
    <source>
        <dbReference type="SAM" id="MobiDB-lite"/>
    </source>
</evidence>